<reference key="1">
    <citation type="journal article" date="1998" name="Comp. Biochem. Physiol.">
        <title>Cloning, sequencing and characterization of the tilapia insulin gene.</title>
        <authorList>
            <person name="Mansour M."/>
            <person name="Wright J.R. Jr."/>
            <person name="Pohajdak B."/>
        </authorList>
    </citation>
    <scope>NUCLEOTIDE SEQUENCE [GENOMIC DNA]</scope>
</reference>
<reference key="2">
    <citation type="journal article" date="1995" name="Comp. Biochem. Physiol.">
        <title>Characterization of the pancreatic hormones from the Brockmann body of the tilapia: implications for islet xenograft studies.</title>
        <authorList>
            <person name="Nguyen T.M."/>
            <person name="Wright J.R. Jr."/>
            <person name="Nielsen P.F."/>
            <person name="Conlon J.M."/>
        </authorList>
    </citation>
    <scope>PROTEIN SEQUENCE OF 25-54 AND 93-113</scope>
</reference>
<protein>
    <recommendedName>
        <fullName>Insulin</fullName>
    </recommendedName>
    <component>
        <recommendedName>
            <fullName>Insulin B chain</fullName>
        </recommendedName>
    </component>
    <component>
        <recommendedName>
            <fullName>Insulin A chain</fullName>
        </recommendedName>
    </component>
</protein>
<feature type="signal peptide" evidence="2">
    <location>
        <begin position="1"/>
        <end position="24"/>
    </location>
</feature>
<feature type="peptide" id="PRO_0000015865" description="Insulin B chain">
    <location>
        <begin position="25"/>
        <end position="54"/>
    </location>
</feature>
<feature type="propeptide" id="PRO_0000015866" description="C peptide">
    <location>
        <begin position="56"/>
        <end position="90"/>
    </location>
</feature>
<feature type="peptide" id="PRO_0000015867" description="Insulin A chain">
    <location>
        <begin position="93"/>
        <end position="113"/>
    </location>
</feature>
<feature type="disulfide bond" description="Interchain (between B and A chains)" evidence="1">
    <location>
        <begin position="32"/>
        <end position="99"/>
    </location>
</feature>
<feature type="disulfide bond" description="Interchain (between B and A chains)" evidence="1">
    <location>
        <begin position="44"/>
        <end position="112"/>
    </location>
</feature>
<feature type="disulfide bond" evidence="1">
    <location>
        <begin position="98"/>
        <end position="103"/>
    </location>
</feature>
<comment type="function">
    <text>Insulin decreases blood glucose concentration. It increases cell permeability to monosaccharides, amino acids and fatty acids. It accelerates glycolysis, the pentose phosphate cycle, and glycogen synthesis in liver.</text>
</comment>
<comment type="subunit">
    <text>Heterodimer of a B chain and an A chain linked by two disulfide bonds.</text>
</comment>
<comment type="subcellular location">
    <subcellularLocation>
        <location>Secreted</location>
    </subcellularLocation>
</comment>
<comment type="similarity">
    <text evidence="3">Belongs to the insulin family.</text>
</comment>
<dbReference type="EMBL" id="AF038123">
    <property type="protein sequence ID" value="AAD22742.1"/>
    <property type="molecule type" value="Genomic_DNA"/>
</dbReference>
<dbReference type="SMR" id="P81025"/>
<dbReference type="FunCoup" id="P81025">
    <property type="interactions" value="237"/>
</dbReference>
<dbReference type="STRING" id="8128.ENSONIP00000000431"/>
<dbReference type="eggNOG" id="ENOG502S3FQ">
    <property type="taxonomic scope" value="Eukaryota"/>
</dbReference>
<dbReference type="InParanoid" id="P81025"/>
<dbReference type="Proteomes" id="UP000005207">
    <property type="component" value="Unplaced"/>
</dbReference>
<dbReference type="GO" id="GO:0005615">
    <property type="term" value="C:extracellular space"/>
    <property type="evidence" value="ECO:0007669"/>
    <property type="project" value="TreeGrafter"/>
</dbReference>
<dbReference type="GO" id="GO:0005179">
    <property type="term" value="F:hormone activity"/>
    <property type="evidence" value="ECO:0007669"/>
    <property type="project" value="UniProtKB-KW"/>
</dbReference>
<dbReference type="GO" id="GO:0006006">
    <property type="term" value="P:glucose metabolic process"/>
    <property type="evidence" value="ECO:0007669"/>
    <property type="project" value="UniProtKB-KW"/>
</dbReference>
<dbReference type="CDD" id="cd04367">
    <property type="entry name" value="IlGF_insulin_like"/>
    <property type="match status" value="1"/>
</dbReference>
<dbReference type="FunFam" id="1.10.100.10:FF:000003">
    <property type="entry name" value="Insulin"/>
    <property type="match status" value="1"/>
</dbReference>
<dbReference type="Gene3D" id="1.10.100.10">
    <property type="entry name" value="Insulin-like"/>
    <property type="match status" value="1"/>
</dbReference>
<dbReference type="InterPro" id="IPR004825">
    <property type="entry name" value="Insulin"/>
</dbReference>
<dbReference type="InterPro" id="IPR016179">
    <property type="entry name" value="Insulin-like"/>
</dbReference>
<dbReference type="InterPro" id="IPR036438">
    <property type="entry name" value="Insulin-like_sf"/>
</dbReference>
<dbReference type="InterPro" id="IPR022353">
    <property type="entry name" value="Insulin_CS"/>
</dbReference>
<dbReference type="InterPro" id="IPR022352">
    <property type="entry name" value="Insulin_family"/>
</dbReference>
<dbReference type="PANTHER" id="PTHR11454:SF9">
    <property type="entry name" value="INSULIN"/>
    <property type="match status" value="1"/>
</dbReference>
<dbReference type="PANTHER" id="PTHR11454">
    <property type="entry name" value="INSULIN/INSULIN GROWTH FACTOR"/>
    <property type="match status" value="1"/>
</dbReference>
<dbReference type="Pfam" id="PF00049">
    <property type="entry name" value="Insulin"/>
    <property type="match status" value="1"/>
</dbReference>
<dbReference type="PRINTS" id="PR00277">
    <property type="entry name" value="INSULIN"/>
</dbReference>
<dbReference type="PRINTS" id="PR00276">
    <property type="entry name" value="INSULINFAMLY"/>
</dbReference>
<dbReference type="SMART" id="SM00078">
    <property type="entry name" value="IlGF"/>
    <property type="match status" value="1"/>
</dbReference>
<dbReference type="SUPFAM" id="SSF56994">
    <property type="entry name" value="Insulin-like"/>
    <property type="match status" value="1"/>
</dbReference>
<dbReference type="PROSITE" id="PS00262">
    <property type="entry name" value="INSULIN"/>
    <property type="match status" value="1"/>
</dbReference>
<keyword id="KW-0119">Carbohydrate metabolism</keyword>
<keyword id="KW-0165">Cleavage on pair of basic residues</keyword>
<keyword id="KW-0903">Direct protein sequencing</keyword>
<keyword id="KW-1015">Disulfide bond</keyword>
<keyword id="KW-0313">Glucose metabolism</keyword>
<keyword id="KW-0372">Hormone</keyword>
<keyword id="KW-1185">Reference proteome</keyword>
<keyword id="KW-0964">Secreted</keyword>
<keyword id="KW-0732">Signal</keyword>
<accession>P81025</accession>
<accession>Q9W653</accession>
<gene>
    <name type="primary">ins</name>
</gene>
<sequence length="113" mass="12480">MAALWLQAFSLLVLMMVSWPGSQAVGGPQHLCGSHLVDALYLVCGDRGFFYNPRRDVDPLLGFLPPKAGGAVVQGGENEVTFKDQMEMMVKRGIVEECCHKPCTIFDLQNYCN</sequence>
<evidence type="ECO:0000250" key="1"/>
<evidence type="ECO:0000269" key="2">
    <source>
    </source>
</evidence>
<evidence type="ECO:0000305" key="3"/>
<organism>
    <name type="scientific">Oreochromis niloticus</name>
    <name type="common">Nile tilapia</name>
    <name type="synonym">Tilapia nilotica</name>
    <dbReference type="NCBI Taxonomy" id="8128"/>
    <lineage>
        <taxon>Eukaryota</taxon>
        <taxon>Metazoa</taxon>
        <taxon>Chordata</taxon>
        <taxon>Craniata</taxon>
        <taxon>Vertebrata</taxon>
        <taxon>Euteleostomi</taxon>
        <taxon>Actinopterygii</taxon>
        <taxon>Neopterygii</taxon>
        <taxon>Teleostei</taxon>
        <taxon>Neoteleostei</taxon>
        <taxon>Acanthomorphata</taxon>
        <taxon>Ovalentaria</taxon>
        <taxon>Cichlomorphae</taxon>
        <taxon>Cichliformes</taxon>
        <taxon>Cichlidae</taxon>
        <taxon>African cichlids</taxon>
        <taxon>Pseudocrenilabrinae</taxon>
        <taxon>Oreochromini</taxon>
        <taxon>Oreochromis</taxon>
    </lineage>
</organism>
<proteinExistence type="evidence at protein level"/>
<name>INS_ORENI</name>